<comment type="function">
    <text evidence="1">One of the primary rRNA binding proteins, it binds directly to 16S rRNA central domain where it helps coordinate assembly of the platform of the 30S subunit.</text>
</comment>
<comment type="subunit">
    <text evidence="1">Part of the 30S ribosomal subunit. Contacts proteins S5 and S12.</text>
</comment>
<comment type="similarity">
    <text evidence="1">Belongs to the universal ribosomal protein uS8 family.</text>
</comment>
<proteinExistence type="inferred from homology"/>
<accession>B8EBJ1</accession>
<sequence length="130" mass="14020">MSMQDPIADMLTRIRNGQAANHVSVKMPSAKLKVAIAKLLKDEGYIADYAVADEAKPELEVTLKYFQGQPVVETIQRVSRPGLRIYKGKNELPKVMGGLGVAIVSTSKGLMTDRAARLAGMGGEVICYVA</sequence>
<organism>
    <name type="scientific">Shewanella baltica (strain OS223)</name>
    <dbReference type="NCBI Taxonomy" id="407976"/>
    <lineage>
        <taxon>Bacteria</taxon>
        <taxon>Pseudomonadati</taxon>
        <taxon>Pseudomonadota</taxon>
        <taxon>Gammaproteobacteria</taxon>
        <taxon>Alteromonadales</taxon>
        <taxon>Shewanellaceae</taxon>
        <taxon>Shewanella</taxon>
    </lineage>
</organism>
<gene>
    <name evidence="1" type="primary">rpsH</name>
    <name type="ordered locus">Sbal223_4042</name>
</gene>
<keyword id="KW-0687">Ribonucleoprotein</keyword>
<keyword id="KW-0689">Ribosomal protein</keyword>
<keyword id="KW-0694">RNA-binding</keyword>
<keyword id="KW-0699">rRNA-binding</keyword>
<protein>
    <recommendedName>
        <fullName evidence="1">Small ribosomal subunit protein uS8</fullName>
    </recommendedName>
    <alternativeName>
        <fullName evidence="2">30S ribosomal protein S8</fullName>
    </alternativeName>
</protein>
<feature type="chain" id="PRO_1000165349" description="Small ribosomal subunit protein uS8">
    <location>
        <begin position="1"/>
        <end position="130"/>
    </location>
</feature>
<evidence type="ECO:0000255" key="1">
    <source>
        <dbReference type="HAMAP-Rule" id="MF_01302"/>
    </source>
</evidence>
<evidence type="ECO:0000305" key="2"/>
<dbReference type="EMBL" id="CP001252">
    <property type="protein sequence ID" value="ACK48515.1"/>
    <property type="molecule type" value="Genomic_DNA"/>
</dbReference>
<dbReference type="RefSeq" id="WP_006083586.1">
    <property type="nucleotide sequence ID" value="NC_011663.1"/>
</dbReference>
<dbReference type="SMR" id="B8EBJ1"/>
<dbReference type="GeneID" id="11770571"/>
<dbReference type="KEGG" id="sbp:Sbal223_4042"/>
<dbReference type="HOGENOM" id="CLU_098428_0_0_6"/>
<dbReference type="Proteomes" id="UP000002507">
    <property type="component" value="Chromosome"/>
</dbReference>
<dbReference type="GO" id="GO:1990904">
    <property type="term" value="C:ribonucleoprotein complex"/>
    <property type="evidence" value="ECO:0007669"/>
    <property type="project" value="UniProtKB-KW"/>
</dbReference>
<dbReference type="GO" id="GO:0005840">
    <property type="term" value="C:ribosome"/>
    <property type="evidence" value="ECO:0007669"/>
    <property type="project" value="UniProtKB-KW"/>
</dbReference>
<dbReference type="GO" id="GO:0019843">
    <property type="term" value="F:rRNA binding"/>
    <property type="evidence" value="ECO:0007669"/>
    <property type="project" value="UniProtKB-UniRule"/>
</dbReference>
<dbReference type="GO" id="GO:0003735">
    <property type="term" value="F:structural constituent of ribosome"/>
    <property type="evidence" value="ECO:0007669"/>
    <property type="project" value="InterPro"/>
</dbReference>
<dbReference type="GO" id="GO:0006412">
    <property type="term" value="P:translation"/>
    <property type="evidence" value="ECO:0007669"/>
    <property type="project" value="UniProtKB-UniRule"/>
</dbReference>
<dbReference type="FunFam" id="3.30.1370.30:FF:000003">
    <property type="entry name" value="30S ribosomal protein S8"/>
    <property type="match status" value="1"/>
</dbReference>
<dbReference type="FunFam" id="3.30.1490.10:FF:000001">
    <property type="entry name" value="30S ribosomal protein S8"/>
    <property type="match status" value="1"/>
</dbReference>
<dbReference type="Gene3D" id="3.30.1370.30">
    <property type="match status" value="1"/>
</dbReference>
<dbReference type="Gene3D" id="3.30.1490.10">
    <property type="match status" value="1"/>
</dbReference>
<dbReference type="HAMAP" id="MF_01302_B">
    <property type="entry name" value="Ribosomal_uS8_B"/>
    <property type="match status" value="1"/>
</dbReference>
<dbReference type="InterPro" id="IPR000630">
    <property type="entry name" value="Ribosomal_uS8"/>
</dbReference>
<dbReference type="InterPro" id="IPR047863">
    <property type="entry name" value="Ribosomal_uS8_CS"/>
</dbReference>
<dbReference type="InterPro" id="IPR035987">
    <property type="entry name" value="Ribosomal_uS8_sf"/>
</dbReference>
<dbReference type="NCBIfam" id="NF001109">
    <property type="entry name" value="PRK00136.1"/>
    <property type="match status" value="1"/>
</dbReference>
<dbReference type="PANTHER" id="PTHR11758">
    <property type="entry name" value="40S RIBOSOMAL PROTEIN S15A"/>
    <property type="match status" value="1"/>
</dbReference>
<dbReference type="Pfam" id="PF00410">
    <property type="entry name" value="Ribosomal_S8"/>
    <property type="match status" value="1"/>
</dbReference>
<dbReference type="SUPFAM" id="SSF56047">
    <property type="entry name" value="Ribosomal protein S8"/>
    <property type="match status" value="1"/>
</dbReference>
<dbReference type="PROSITE" id="PS00053">
    <property type="entry name" value="RIBOSOMAL_S8"/>
    <property type="match status" value="1"/>
</dbReference>
<reference key="1">
    <citation type="submission" date="2008-12" db="EMBL/GenBank/DDBJ databases">
        <title>Complete sequence of chromosome of Shewanella baltica OS223.</title>
        <authorList>
            <consortium name="US DOE Joint Genome Institute"/>
            <person name="Lucas S."/>
            <person name="Copeland A."/>
            <person name="Lapidus A."/>
            <person name="Glavina del Rio T."/>
            <person name="Dalin E."/>
            <person name="Tice H."/>
            <person name="Bruce D."/>
            <person name="Goodwin L."/>
            <person name="Pitluck S."/>
            <person name="Chertkov O."/>
            <person name="Meincke L."/>
            <person name="Brettin T."/>
            <person name="Detter J.C."/>
            <person name="Han C."/>
            <person name="Kuske C.R."/>
            <person name="Larimer F."/>
            <person name="Land M."/>
            <person name="Hauser L."/>
            <person name="Kyrpides N."/>
            <person name="Ovchinnikova G."/>
            <person name="Brettar I."/>
            <person name="Rodrigues J."/>
            <person name="Konstantinidis K."/>
            <person name="Tiedje J."/>
        </authorList>
    </citation>
    <scope>NUCLEOTIDE SEQUENCE [LARGE SCALE GENOMIC DNA]</scope>
    <source>
        <strain>OS223</strain>
    </source>
</reference>
<name>RS8_SHEB2</name>